<evidence type="ECO:0000255" key="1">
    <source>
        <dbReference type="HAMAP-Rule" id="MF_01026"/>
    </source>
</evidence>
<keyword id="KW-0004">4Fe-4S</keyword>
<keyword id="KW-0028">Amino-acid biosynthesis</keyword>
<keyword id="KW-0100">Branched-chain amino acid biosynthesis</keyword>
<keyword id="KW-0408">Iron</keyword>
<keyword id="KW-0411">Iron-sulfur</keyword>
<keyword id="KW-0432">Leucine biosynthesis</keyword>
<keyword id="KW-0456">Lyase</keyword>
<keyword id="KW-0479">Metal-binding</keyword>
<keyword id="KW-1185">Reference proteome</keyword>
<proteinExistence type="inferred from homology"/>
<sequence>MSKDTLFDKVWDLHKVSSLPGGSDQIFIGLHLIHEVTSPQAFGALKDKNLRVKFPSRTVATVDHIVPTDNQSRPFKDNLAEQMIETLEKNCIEHKIRFFNIGSGNQGIVHVVAPELGLTQPGMTIACGDSHTSTHGAFGSIAFGIGTSQVRDVLATQTIAMNKLKVRQIWCENKLSNGVYAKDLVLHIINKLGVKAGVGFAYEFAGPAINSLSMEERMTICNMSIEGGARCGYINPDEKTFSYIKNKLCAPRNENWDEALLWWKSLKSDANSIYDDVTKIDASKVEPTVTWGITPGQSVGINQKIPLLEELSPDDQFVAKEAYEYMGFKPGQSIKDTPIDVCFIGSCTNGRISDLRVAAKVVKDKKVSQNIKAFVVPGSEKVAKEAKIEGLDKIFLDAGFQWREPGCSMCLAMNSDKLIGNQLSASSSNRNFKGRQGSPNGRTLLMSPAMVAAAAISGKVTDIRNFM</sequence>
<reference key="1">
    <citation type="journal article" date="2007" name="PLoS Genet.">
        <title>Patterns and implications of gene gain and loss in the evolution of Prochlorococcus.</title>
        <authorList>
            <person name="Kettler G.C."/>
            <person name="Martiny A.C."/>
            <person name="Huang K."/>
            <person name="Zucker J."/>
            <person name="Coleman M.L."/>
            <person name="Rodrigue S."/>
            <person name="Chen F."/>
            <person name="Lapidus A."/>
            <person name="Ferriera S."/>
            <person name="Johnson J."/>
            <person name="Steglich C."/>
            <person name="Church G.M."/>
            <person name="Richardson P."/>
            <person name="Chisholm S.W."/>
        </authorList>
    </citation>
    <scope>NUCLEOTIDE SEQUENCE [LARGE SCALE GENOMIC DNA]</scope>
    <source>
        <strain>MIT 9301</strain>
    </source>
</reference>
<dbReference type="EC" id="4.2.1.33" evidence="1"/>
<dbReference type="EMBL" id="CP000576">
    <property type="protein sequence ID" value="ABO16902.1"/>
    <property type="molecule type" value="Genomic_DNA"/>
</dbReference>
<dbReference type="RefSeq" id="WP_011862297.1">
    <property type="nucleotide sequence ID" value="NC_009091.1"/>
</dbReference>
<dbReference type="SMR" id="A3PAX7"/>
<dbReference type="STRING" id="167546.P9301_02791"/>
<dbReference type="KEGG" id="pmg:P9301_02791"/>
<dbReference type="eggNOG" id="COG0065">
    <property type="taxonomic scope" value="Bacteria"/>
</dbReference>
<dbReference type="HOGENOM" id="CLU_006714_3_4_3"/>
<dbReference type="OrthoDB" id="9802769at2"/>
<dbReference type="UniPathway" id="UPA00048">
    <property type="reaction ID" value="UER00071"/>
</dbReference>
<dbReference type="Proteomes" id="UP000001430">
    <property type="component" value="Chromosome"/>
</dbReference>
<dbReference type="GO" id="GO:0003861">
    <property type="term" value="F:3-isopropylmalate dehydratase activity"/>
    <property type="evidence" value="ECO:0007669"/>
    <property type="project" value="UniProtKB-UniRule"/>
</dbReference>
<dbReference type="GO" id="GO:0051539">
    <property type="term" value="F:4 iron, 4 sulfur cluster binding"/>
    <property type="evidence" value="ECO:0007669"/>
    <property type="project" value="UniProtKB-KW"/>
</dbReference>
<dbReference type="GO" id="GO:0046872">
    <property type="term" value="F:metal ion binding"/>
    <property type="evidence" value="ECO:0007669"/>
    <property type="project" value="UniProtKB-KW"/>
</dbReference>
<dbReference type="GO" id="GO:0009098">
    <property type="term" value="P:L-leucine biosynthetic process"/>
    <property type="evidence" value="ECO:0007669"/>
    <property type="project" value="UniProtKB-UniRule"/>
</dbReference>
<dbReference type="CDD" id="cd01583">
    <property type="entry name" value="IPMI"/>
    <property type="match status" value="1"/>
</dbReference>
<dbReference type="Gene3D" id="3.30.499.10">
    <property type="entry name" value="Aconitase, domain 3"/>
    <property type="match status" value="2"/>
</dbReference>
<dbReference type="HAMAP" id="MF_01026">
    <property type="entry name" value="LeuC_type1"/>
    <property type="match status" value="1"/>
</dbReference>
<dbReference type="InterPro" id="IPR004430">
    <property type="entry name" value="3-IsopropMal_deHydase_lsu"/>
</dbReference>
<dbReference type="InterPro" id="IPR015931">
    <property type="entry name" value="Acnase/IPM_dHydase_lsu_aba_1/3"/>
</dbReference>
<dbReference type="InterPro" id="IPR001030">
    <property type="entry name" value="Acoase/IPM_deHydtase_lsu_aba"/>
</dbReference>
<dbReference type="InterPro" id="IPR018136">
    <property type="entry name" value="Aconitase_4Fe-4S_BS"/>
</dbReference>
<dbReference type="InterPro" id="IPR036008">
    <property type="entry name" value="Aconitase_4Fe-4S_dom"/>
</dbReference>
<dbReference type="InterPro" id="IPR050067">
    <property type="entry name" value="IPM_dehydratase_rel_enz"/>
</dbReference>
<dbReference type="InterPro" id="IPR033941">
    <property type="entry name" value="IPMI_cat"/>
</dbReference>
<dbReference type="NCBIfam" id="TIGR00170">
    <property type="entry name" value="leuC"/>
    <property type="match status" value="1"/>
</dbReference>
<dbReference type="NCBIfam" id="NF004016">
    <property type="entry name" value="PRK05478.1"/>
    <property type="match status" value="1"/>
</dbReference>
<dbReference type="NCBIfam" id="NF009116">
    <property type="entry name" value="PRK12466.1"/>
    <property type="match status" value="1"/>
</dbReference>
<dbReference type="PANTHER" id="PTHR43822:SF9">
    <property type="entry name" value="3-ISOPROPYLMALATE DEHYDRATASE"/>
    <property type="match status" value="1"/>
</dbReference>
<dbReference type="PANTHER" id="PTHR43822">
    <property type="entry name" value="HOMOACONITASE, MITOCHONDRIAL-RELATED"/>
    <property type="match status" value="1"/>
</dbReference>
<dbReference type="Pfam" id="PF00330">
    <property type="entry name" value="Aconitase"/>
    <property type="match status" value="1"/>
</dbReference>
<dbReference type="PRINTS" id="PR00415">
    <property type="entry name" value="ACONITASE"/>
</dbReference>
<dbReference type="SUPFAM" id="SSF53732">
    <property type="entry name" value="Aconitase iron-sulfur domain"/>
    <property type="match status" value="1"/>
</dbReference>
<dbReference type="PROSITE" id="PS00450">
    <property type="entry name" value="ACONITASE_1"/>
    <property type="match status" value="1"/>
</dbReference>
<dbReference type="PROSITE" id="PS01244">
    <property type="entry name" value="ACONITASE_2"/>
    <property type="match status" value="1"/>
</dbReference>
<comment type="function">
    <text evidence="1">Catalyzes the isomerization between 2-isopropylmalate and 3-isopropylmalate, via the formation of 2-isopropylmaleate.</text>
</comment>
<comment type="catalytic activity">
    <reaction evidence="1">
        <text>(2R,3S)-3-isopropylmalate = (2S)-2-isopropylmalate</text>
        <dbReference type="Rhea" id="RHEA:32287"/>
        <dbReference type="ChEBI" id="CHEBI:1178"/>
        <dbReference type="ChEBI" id="CHEBI:35121"/>
        <dbReference type="EC" id="4.2.1.33"/>
    </reaction>
</comment>
<comment type="cofactor">
    <cofactor evidence="1">
        <name>[4Fe-4S] cluster</name>
        <dbReference type="ChEBI" id="CHEBI:49883"/>
    </cofactor>
    <text evidence="1">Binds 1 [4Fe-4S] cluster per subunit.</text>
</comment>
<comment type="pathway">
    <text evidence="1">Amino-acid biosynthesis; L-leucine biosynthesis; L-leucine from 3-methyl-2-oxobutanoate: step 2/4.</text>
</comment>
<comment type="subunit">
    <text evidence="1">Heterodimer of LeuC and LeuD.</text>
</comment>
<comment type="similarity">
    <text evidence="1">Belongs to the aconitase/IPM isomerase family. LeuC type 1 subfamily.</text>
</comment>
<name>LEUC_PROM0</name>
<gene>
    <name evidence="1" type="primary">leuC</name>
    <name type="ordered locus">P9301_02791</name>
</gene>
<protein>
    <recommendedName>
        <fullName evidence="1">3-isopropylmalate dehydratase large subunit</fullName>
        <ecNumber evidence="1">4.2.1.33</ecNumber>
    </recommendedName>
    <alternativeName>
        <fullName evidence="1">Alpha-IPM isomerase</fullName>
        <shortName evidence="1">IPMI</shortName>
    </alternativeName>
    <alternativeName>
        <fullName evidence="1">Isopropylmalate isomerase</fullName>
    </alternativeName>
</protein>
<accession>A3PAX7</accession>
<organism>
    <name type="scientific">Prochlorococcus marinus (strain MIT 9301)</name>
    <dbReference type="NCBI Taxonomy" id="167546"/>
    <lineage>
        <taxon>Bacteria</taxon>
        <taxon>Bacillati</taxon>
        <taxon>Cyanobacteriota</taxon>
        <taxon>Cyanophyceae</taxon>
        <taxon>Synechococcales</taxon>
        <taxon>Prochlorococcaceae</taxon>
        <taxon>Prochlorococcus</taxon>
    </lineage>
</organism>
<feature type="chain" id="PRO_1000063582" description="3-isopropylmalate dehydratase large subunit">
    <location>
        <begin position="1"/>
        <end position="467"/>
    </location>
</feature>
<feature type="binding site" evidence="1">
    <location>
        <position position="347"/>
    </location>
    <ligand>
        <name>[4Fe-4S] cluster</name>
        <dbReference type="ChEBI" id="CHEBI:49883"/>
    </ligand>
</feature>
<feature type="binding site" evidence="1">
    <location>
        <position position="407"/>
    </location>
    <ligand>
        <name>[4Fe-4S] cluster</name>
        <dbReference type="ChEBI" id="CHEBI:49883"/>
    </ligand>
</feature>
<feature type="binding site" evidence="1">
    <location>
        <position position="410"/>
    </location>
    <ligand>
        <name>[4Fe-4S] cluster</name>
        <dbReference type="ChEBI" id="CHEBI:49883"/>
    </ligand>
</feature>